<organismHost>
    <name type="scientific">Homo sapiens</name>
    <name type="common">Human</name>
    <dbReference type="NCBI Taxonomy" id="9606"/>
</organismHost>
<dbReference type="EC" id="3.6.4.-" evidence="1"/>
<dbReference type="EMBL" id="AF148805">
    <property type="protein sequence ID" value="ABD28894.1"/>
    <property type="molecule type" value="Genomic_DNA"/>
</dbReference>
<dbReference type="RefSeq" id="YP_001129396.1">
    <property type="nucleotide sequence ID" value="NC_009333.1"/>
</dbReference>
<dbReference type="MetOSite" id="Q2HR89"/>
<dbReference type="DNASU" id="4961457"/>
<dbReference type="GeneID" id="4961457"/>
<dbReference type="KEGG" id="vg:4961457"/>
<dbReference type="Proteomes" id="UP000000942">
    <property type="component" value="Segment"/>
</dbReference>
<dbReference type="GO" id="GO:0042025">
    <property type="term" value="C:host cell nucleus"/>
    <property type="evidence" value="ECO:0007669"/>
    <property type="project" value="UniProtKB-SubCell"/>
</dbReference>
<dbReference type="GO" id="GO:0005524">
    <property type="term" value="F:ATP binding"/>
    <property type="evidence" value="ECO:0007669"/>
    <property type="project" value="UniProtKB-KW"/>
</dbReference>
<dbReference type="GO" id="GO:0004386">
    <property type="term" value="F:helicase activity"/>
    <property type="evidence" value="ECO:0007669"/>
    <property type="project" value="UniProtKB-KW"/>
</dbReference>
<dbReference type="GO" id="GO:0016787">
    <property type="term" value="F:hydrolase activity"/>
    <property type="evidence" value="ECO:0007669"/>
    <property type="project" value="UniProtKB-KW"/>
</dbReference>
<dbReference type="GO" id="GO:0039686">
    <property type="term" value="P:bidirectional double-stranded viral DNA replication"/>
    <property type="evidence" value="ECO:0000314"/>
    <property type="project" value="UniProtKB"/>
</dbReference>
<dbReference type="GO" id="GO:0006260">
    <property type="term" value="P:DNA replication"/>
    <property type="evidence" value="ECO:0007669"/>
    <property type="project" value="UniProtKB-KW"/>
</dbReference>
<dbReference type="Gene3D" id="3.40.50.300">
    <property type="entry name" value="P-loop containing nucleotide triphosphate hydrolases"/>
    <property type="match status" value="1"/>
</dbReference>
<dbReference type="HAMAP" id="MF_04030">
    <property type="entry name" value="HSV_HELI"/>
    <property type="match status" value="1"/>
</dbReference>
<dbReference type="InterPro" id="IPR003840">
    <property type="entry name" value="DNA_helicase_dom"/>
</dbReference>
<dbReference type="InterPro" id="IPR034711">
    <property type="entry name" value="HSV_HELI"/>
</dbReference>
<dbReference type="InterPro" id="IPR027417">
    <property type="entry name" value="P-loop_NTPase"/>
</dbReference>
<dbReference type="Pfam" id="PF02689">
    <property type="entry name" value="Herpes_Helicase"/>
    <property type="match status" value="1"/>
</dbReference>
<dbReference type="SUPFAM" id="SSF52540">
    <property type="entry name" value="P-loop containing nucleoside triphosphate hydrolases"/>
    <property type="match status" value="2"/>
</dbReference>
<comment type="function">
    <text evidence="1">Component of the helicase/primase complex. Unwinds the DNA at the replication forks and generates single-stranded DNA for both leading and lagging strand synthesis. The primase synthesizes short RNA primers on the lagging strand that the polymerase elongates using dNTPs. Possesses helicase-like motifs and therefore may act as the helicase subunit of the complex.</text>
</comment>
<comment type="subunit">
    <text evidence="1">Associates with the primase and the primase-associated factor to form the helicase-primase complex.</text>
</comment>
<comment type="subcellular location">
    <subcellularLocation>
        <location evidence="1">Host nucleus</location>
    </subcellularLocation>
</comment>
<comment type="similarity">
    <text evidence="1">Belongs to the herpesviridae helicase family.</text>
</comment>
<proteinExistence type="inferred from homology"/>
<name>HELI_HHV8P</name>
<gene>
    <name evidence="1" type="primary">HELI</name>
    <name type="ordered locus">ORF44</name>
</gene>
<evidence type="ECO:0000255" key="1">
    <source>
        <dbReference type="HAMAP-Rule" id="MF_04030"/>
    </source>
</evidence>
<feature type="chain" id="PRO_0000423803" description="DNA replication helicase">
    <location>
        <begin position="1"/>
        <end position="788"/>
    </location>
</feature>
<feature type="binding site" evidence="1">
    <location>
        <begin position="73"/>
        <end position="80"/>
    </location>
    <ligand>
        <name>ATP</name>
        <dbReference type="ChEBI" id="CHEBI:30616"/>
    </ligand>
</feature>
<sequence length="788" mass="88237">MDSSEGCTDMDEPSPGFILNMTSDAKVRSVVEQIDRLSNITTSPPEMGWYDLEFDPLEDEGPFLPFSAYVITGTAGAGKSTSVSALHQNLNCLITGATVVAAQNLSRALKSYCPTIYHAFGFKSRHINICQRKVPKVTQSSIEQLQRYELARYWPTVTDIIREFMRKKQKGQYSSLSQSAFRLLCRMGGANLWTSNIIVIDEAGTLSSHILTAVVFFYWFYNSWLDTPLYRNGAVPCIVCVGSPTQTDAFQSVFNHTQQRNEISACDNVLTFLLGKREVADYIRLDENWALFINNKRCTDPQFGHLLKTLEYNLDISPELMDYIDRFVVPKSKILDPLEYAGWTRLFISHQEVKSFLATLHTCLSSNKDAVSTKLFTCPVVCEVFTEPFEEYKRAVGLTHMTPIEWVTKNLFRLSNYSQFADQDMAVVGTYITDASTQITFATKFVKNSYATLTGKTKKCICGFHGSYQRFKSILDGELFIESHSHDNPAYVYSFLSTLLYNAMYSFYAHGVKQGHEEFLRDLRELPVSQELISEMSSEDVLGQEGDTDAFYLTASLPPSPTHAALPTLVAYYSGAKELFCNRLALARRHFGDEFLHSDFSTFTVNIVVRDGVDFVSTSPGLHGLVAYASTIDTYIIQGYTFLPVRFGRPGGQRLSEDLRRKMPSIVVQDSSGFIACLENNVTKMTETLEGGDVFNICCAGDYGISSNLAMTIVKAQGVSLSRVAISFGNHRNIRASLVYVGVSRAIDARYLVMDSNPLKLMDRGDAQSPSSKYIIKALCNPKTTLIY</sequence>
<organism>
    <name type="scientific">Human herpesvirus 8 type P (isolate GK18)</name>
    <name type="common">HHV-8</name>
    <name type="synonym">Kaposi's sarcoma-associated herpesvirus</name>
    <dbReference type="NCBI Taxonomy" id="868565"/>
    <lineage>
        <taxon>Viruses</taxon>
        <taxon>Duplodnaviria</taxon>
        <taxon>Heunggongvirae</taxon>
        <taxon>Peploviricota</taxon>
        <taxon>Herviviricetes</taxon>
        <taxon>Herpesvirales</taxon>
        <taxon>Orthoherpesviridae</taxon>
        <taxon>Gammaherpesvirinae</taxon>
        <taxon>Rhadinovirus</taxon>
        <taxon>Rhadinovirus humangamma8</taxon>
        <taxon>Human herpesvirus 8</taxon>
    </lineage>
</organism>
<protein>
    <recommendedName>
        <fullName evidence="1">DNA replication helicase</fullName>
        <ecNumber evidence="1">3.6.4.-</ecNumber>
    </recommendedName>
</protein>
<reference key="1">
    <citation type="journal article" date="1999" name="J. Virol.">
        <title>Identification of a spliced gene from Kaposi's sarcoma-associated herpesvirus encoding a protein with similarities to latent membrane proteins 1 and 2A of Epstein-Barr virus.</title>
        <authorList>
            <person name="Glenn M."/>
            <person name="Rainbow L."/>
            <person name="Aurade F."/>
            <person name="Davison A."/>
            <person name="Schulz T.F."/>
        </authorList>
    </citation>
    <scope>NUCLEOTIDE SEQUENCE [LARGE SCALE GENOMIC DNA]</scope>
</reference>
<reference key="2">
    <citation type="journal article" date="2006" name="J. Gen. Virol.">
        <title>Kaposi's sarcoma-associated herpesvirus immune modulation: an overview.</title>
        <authorList>
            <person name="Rezaee S.A.R."/>
            <person name="Cunningham C."/>
            <person name="Davison A.J."/>
            <person name="Blackbourn D.J."/>
        </authorList>
    </citation>
    <scope>NUCLEOTIDE SEQUENCE [LARGE SCALE GENOMIC DNA]</scope>
</reference>
<keyword id="KW-0067">ATP-binding</keyword>
<keyword id="KW-0235">DNA replication</keyword>
<keyword id="KW-0347">Helicase</keyword>
<keyword id="KW-1048">Host nucleus</keyword>
<keyword id="KW-0378">Hydrolase</keyword>
<keyword id="KW-0547">Nucleotide-binding</keyword>
<keyword id="KW-1185">Reference proteome</keyword>
<accession>Q2HR89</accession>
<accession>D0UZQ6</accession>